<feature type="chain" id="PRO_0000059137" description="Polypeptide N-acetylgalactosaminyltransferase 15">
    <location>
        <begin position="1"/>
        <end position="639"/>
    </location>
</feature>
<feature type="topological domain" description="Cytoplasmic" evidence="2">
    <location>
        <begin position="1"/>
        <end position="11"/>
    </location>
</feature>
<feature type="transmembrane region" description="Helical; Signal-anchor for type II membrane protein" evidence="2">
    <location>
        <begin position="12"/>
        <end position="34"/>
    </location>
</feature>
<feature type="topological domain" description="Lumenal" evidence="2">
    <location>
        <begin position="35"/>
        <end position="639"/>
    </location>
</feature>
<feature type="domain" description="Ricin B-type lectin" evidence="3">
    <location>
        <begin position="504"/>
        <end position="631"/>
    </location>
</feature>
<feature type="region of interest" description="Disordered" evidence="4">
    <location>
        <begin position="106"/>
        <end position="155"/>
    </location>
</feature>
<feature type="region of interest" description="Catalytic subdomain A">
    <location>
        <begin position="190"/>
        <end position="299"/>
    </location>
</feature>
<feature type="region of interest" description="Catalytic subdomain B">
    <location>
        <begin position="358"/>
        <end position="420"/>
    </location>
</feature>
<feature type="compositionally biased region" description="Basic and acidic residues" evidence="4">
    <location>
        <begin position="124"/>
        <end position="136"/>
    </location>
</feature>
<feature type="compositionally biased region" description="Acidic residues" evidence="4">
    <location>
        <begin position="137"/>
        <end position="149"/>
    </location>
</feature>
<feature type="binding site" evidence="1">
    <location>
        <position position="231"/>
    </location>
    <ligand>
        <name>substrate</name>
    </ligand>
</feature>
<feature type="binding site" evidence="1">
    <location>
        <position position="260"/>
    </location>
    <ligand>
        <name>substrate</name>
    </ligand>
</feature>
<feature type="binding site" evidence="1">
    <location>
        <position position="283"/>
    </location>
    <ligand>
        <name>Mn(2+)</name>
        <dbReference type="ChEBI" id="CHEBI:29035"/>
    </ligand>
</feature>
<feature type="binding site" evidence="1">
    <location>
        <position position="285"/>
    </location>
    <ligand>
        <name>Mn(2+)</name>
        <dbReference type="ChEBI" id="CHEBI:29035"/>
    </ligand>
</feature>
<feature type="binding site" evidence="1">
    <location>
        <position position="417"/>
    </location>
    <ligand>
        <name>Mn(2+)</name>
        <dbReference type="ChEBI" id="CHEBI:29035"/>
    </ligand>
</feature>
<feature type="glycosylation site" description="N-linked (GlcNAc...) asparagine" evidence="2">
    <location>
        <position position="107"/>
    </location>
</feature>
<feature type="glycosylation site" description="N-linked (GlcNAc...) asparagine" evidence="2">
    <location>
        <position position="574"/>
    </location>
</feature>
<feature type="disulfide bond" evidence="3">
    <location>
        <begin position="181"/>
        <end position="412"/>
    </location>
</feature>
<feature type="disulfide bond" evidence="3">
    <location>
        <begin position="403"/>
        <end position="482"/>
    </location>
</feature>
<feature type="disulfide bond" evidence="3">
    <location>
        <begin position="517"/>
        <end position="536"/>
    </location>
</feature>
<feature type="disulfide bond" evidence="3">
    <location>
        <begin position="562"/>
        <end position="575"/>
    </location>
</feature>
<feature type="disulfide bond" evidence="3">
    <location>
        <begin position="603"/>
        <end position="620"/>
    </location>
</feature>
<feature type="sequence variant" id="VAR_049243" description="In dbSNP:rs36026882.">
    <original>V</original>
    <variation>G</variation>
    <location>
        <position position="68"/>
    </location>
</feature>
<feature type="sequence variant" id="VAR_049244" description="In dbSNP:rs11715981.">
    <original>P</original>
    <variation>L</variation>
    <location>
        <position position="151"/>
    </location>
</feature>
<feature type="sequence variant" id="VAR_049245" description="In dbSNP:rs12634179.">
    <original>P</original>
    <variation>A</variation>
    <location>
        <position position="324"/>
    </location>
</feature>
<feature type="sequence variant" id="VAR_049246" description="In dbSNP:rs17851238." evidence="7 8">
    <original>A</original>
    <variation>T</variation>
    <location>
        <position position="432"/>
    </location>
</feature>
<feature type="sequence variant" id="VAR_019593" description="In dbSNP:rs2271077.">
    <original>H</original>
    <variation>Y</variation>
    <location>
        <position position="510"/>
    </location>
</feature>
<feature type="sequence conflict" description="In Ref. 5; CAD38585." evidence="9" ref="5">
    <original>V</original>
    <variation>D</variation>
    <location>
        <position position="44"/>
    </location>
</feature>
<feature type="sequence conflict" description="In Ref. 5; CAD89983." evidence="9" ref="5">
    <original>K</original>
    <variation>R</variation>
    <location>
        <position position="326"/>
    </location>
</feature>
<keyword id="KW-1015">Disulfide bond</keyword>
<keyword id="KW-0325">Glycoprotein</keyword>
<keyword id="KW-0328">Glycosyltransferase</keyword>
<keyword id="KW-0333">Golgi apparatus</keyword>
<keyword id="KW-0430">Lectin</keyword>
<keyword id="KW-0464">Manganese</keyword>
<keyword id="KW-0472">Membrane</keyword>
<keyword id="KW-0479">Metal-binding</keyword>
<keyword id="KW-1267">Proteomics identification</keyword>
<keyword id="KW-1185">Reference proteome</keyword>
<keyword id="KW-0735">Signal-anchor</keyword>
<keyword id="KW-0808">Transferase</keyword>
<keyword id="KW-0812">Transmembrane</keyword>
<keyword id="KW-1133">Transmembrane helix</keyword>
<organism>
    <name type="scientific">Homo sapiens</name>
    <name type="common">Human</name>
    <dbReference type="NCBI Taxonomy" id="9606"/>
    <lineage>
        <taxon>Eukaryota</taxon>
        <taxon>Metazoa</taxon>
        <taxon>Chordata</taxon>
        <taxon>Craniata</taxon>
        <taxon>Vertebrata</taxon>
        <taxon>Euteleostomi</taxon>
        <taxon>Mammalia</taxon>
        <taxon>Eutheria</taxon>
        <taxon>Euarchontoglires</taxon>
        <taxon>Primates</taxon>
        <taxon>Haplorrhini</taxon>
        <taxon>Catarrhini</taxon>
        <taxon>Hominidae</taxon>
        <taxon>Homo</taxon>
    </lineage>
</organism>
<name>GLT15_HUMAN</name>
<reference key="1">
    <citation type="journal article" date="2004" name="FEBS Lett.">
        <title>Characterization of a novel human UDP-GalNAc transferase, pp-GalNAc-T15.</title>
        <authorList>
            <person name="Cheng L."/>
            <person name="Tachibana K."/>
            <person name="Iwasaki H."/>
            <person name="Kameyama A."/>
            <person name="Zhang Y."/>
            <person name="Kubota T."/>
            <person name="Hiruma T."/>
            <person name="Tachibana K."/>
            <person name="Kudo T."/>
            <person name="Guo J.-M."/>
            <person name="Narimatsu H."/>
        </authorList>
    </citation>
    <scope>NUCLEOTIDE SEQUENCE [MRNA]</scope>
    <scope>TISSUE SPECIFICITY</scope>
    <scope>FUNCTION</scope>
    <scope>CATALYTIC ACTIVITY</scope>
</reference>
<reference key="2">
    <citation type="journal article" date="2001" name="Osteoarthritis Cartilage">
        <title>Identification and initial characterization of 5000 expressed sequenced tags (ESTs) each from adult human normal and osteoarthritic cartilage cDNA libraries.</title>
        <authorList>
            <person name="Kumar S."/>
            <person name="Connor J.R."/>
            <person name="Dodds R.A."/>
            <person name="Halsey W."/>
            <person name="Van Horn M."/>
            <person name="Mao J."/>
            <person name="Sathe G.M."/>
            <person name="Mui P."/>
            <person name="Agarwal P."/>
            <person name="Badger A.M."/>
            <person name="Lee J.C."/>
            <person name="Gowen M."/>
            <person name="Lark M.W."/>
        </authorList>
    </citation>
    <scope>NUCLEOTIDE SEQUENCE [LARGE SCALE MRNA]</scope>
    <scope>TISSUE SPECIFICITY</scope>
    <source>
        <tissue>Osteoarthritic cartilage</tissue>
    </source>
</reference>
<reference key="3">
    <citation type="journal article" date="2003" name="Genome Res.">
        <title>The secreted protein discovery initiative (SPDI), a large-scale effort to identify novel human secreted and transmembrane proteins: a bioinformatics assessment.</title>
        <authorList>
            <person name="Clark H.F."/>
            <person name="Gurney A.L."/>
            <person name="Abaya E."/>
            <person name="Baker K."/>
            <person name="Baldwin D.T."/>
            <person name="Brush J."/>
            <person name="Chen J."/>
            <person name="Chow B."/>
            <person name="Chui C."/>
            <person name="Crowley C."/>
            <person name="Currell B."/>
            <person name="Deuel B."/>
            <person name="Dowd P."/>
            <person name="Eaton D."/>
            <person name="Foster J.S."/>
            <person name="Grimaldi C."/>
            <person name="Gu Q."/>
            <person name="Hass P.E."/>
            <person name="Heldens S."/>
            <person name="Huang A."/>
            <person name="Kim H.S."/>
            <person name="Klimowski L."/>
            <person name="Jin Y."/>
            <person name="Johnson S."/>
            <person name="Lee J."/>
            <person name="Lewis L."/>
            <person name="Liao D."/>
            <person name="Mark M.R."/>
            <person name="Robbie E."/>
            <person name="Sanchez C."/>
            <person name="Schoenfeld J."/>
            <person name="Seshagiri S."/>
            <person name="Simmons L."/>
            <person name="Singh J."/>
            <person name="Smith V."/>
            <person name="Stinson J."/>
            <person name="Vagts A."/>
            <person name="Vandlen R.L."/>
            <person name="Watanabe C."/>
            <person name="Wieand D."/>
            <person name="Woods K."/>
            <person name="Xie M.-H."/>
            <person name="Yansura D.G."/>
            <person name="Yi S."/>
            <person name="Yu G."/>
            <person name="Yuan J."/>
            <person name="Zhang M."/>
            <person name="Zhang Z."/>
            <person name="Goddard A.D."/>
            <person name="Wood W.I."/>
            <person name="Godowski P.J."/>
            <person name="Gray A.M."/>
        </authorList>
    </citation>
    <scope>NUCLEOTIDE SEQUENCE [LARGE SCALE MRNA]</scope>
</reference>
<reference key="4">
    <citation type="journal article" date="2004" name="Nat. Genet.">
        <title>Complete sequencing and characterization of 21,243 full-length human cDNAs.</title>
        <authorList>
            <person name="Ota T."/>
            <person name="Suzuki Y."/>
            <person name="Nishikawa T."/>
            <person name="Otsuki T."/>
            <person name="Sugiyama T."/>
            <person name="Irie R."/>
            <person name="Wakamatsu A."/>
            <person name="Hayashi K."/>
            <person name="Sato H."/>
            <person name="Nagai K."/>
            <person name="Kimura K."/>
            <person name="Makita H."/>
            <person name="Sekine M."/>
            <person name="Obayashi M."/>
            <person name="Nishi T."/>
            <person name="Shibahara T."/>
            <person name="Tanaka T."/>
            <person name="Ishii S."/>
            <person name="Yamamoto J."/>
            <person name="Saito K."/>
            <person name="Kawai Y."/>
            <person name="Isono Y."/>
            <person name="Nakamura Y."/>
            <person name="Nagahari K."/>
            <person name="Murakami K."/>
            <person name="Yasuda T."/>
            <person name="Iwayanagi T."/>
            <person name="Wagatsuma M."/>
            <person name="Shiratori A."/>
            <person name="Sudo H."/>
            <person name="Hosoiri T."/>
            <person name="Kaku Y."/>
            <person name="Kodaira H."/>
            <person name="Kondo H."/>
            <person name="Sugawara M."/>
            <person name="Takahashi M."/>
            <person name="Kanda K."/>
            <person name="Yokoi T."/>
            <person name="Furuya T."/>
            <person name="Kikkawa E."/>
            <person name="Omura Y."/>
            <person name="Abe K."/>
            <person name="Kamihara K."/>
            <person name="Katsuta N."/>
            <person name="Sato K."/>
            <person name="Tanikawa M."/>
            <person name="Yamazaki M."/>
            <person name="Ninomiya K."/>
            <person name="Ishibashi T."/>
            <person name="Yamashita H."/>
            <person name="Murakawa K."/>
            <person name="Fujimori K."/>
            <person name="Tanai H."/>
            <person name="Kimata M."/>
            <person name="Watanabe M."/>
            <person name="Hiraoka S."/>
            <person name="Chiba Y."/>
            <person name="Ishida S."/>
            <person name="Ono Y."/>
            <person name="Takiguchi S."/>
            <person name="Watanabe S."/>
            <person name="Yosida M."/>
            <person name="Hotuta T."/>
            <person name="Kusano J."/>
            <person name="Kanehori K."/>
            <person name="Takahashi-Fujii A."/>
            <person name="Hara H."/>
            <person name="Tanase T.-O."/>
            <person name="Nomura Y."/>
            <person name="Togiya S."/>
            <person name="Komai F."/>
            <person name="Hara R."/>
            <person name="Takeuchi K."/>
            <person name="Arita M."/>
            <person name="Imose N."/>
            <person name="Musashino K."/>
            <person name="Yuuki H."/>
            <person name="Oshima A."/>
            <person name="Sasaki N."/>
            <person name="Aotsuka S."/>
            <person name="Yoshikawa Y."/>
            <person name="Matsunawa H."/>
            <person name="Ichihara T."/>
            <person name="Shiohata N."/>
            <person name="Sano S."/>
            <person name="Moriya S."/>
            <person name="Momiyama H."/>
            <person name="Satoh N."/>
            <person name="Takami S."/>
            <person name="Terashima Y."/>
            <person name="Suzuki O."/>
            <person name="Nakagawa S."/>
            <person name="Senoh A."/>
            <person name="Mizoguchi H."/>
            <person name="Goto Y."/>
            <person name="Shimizu F."/>
            <person name="Wakebe H."/>
            <person name="Hishigaki H."/>
            <person name="Watanabe T."/>
            <person name="Sugiyama A."/>
            <person name="Takemoto M."/>
            <person name="Kawakami B."/>
            <person name="Yamazaki M."/>
            <person name="Watanabe K."/>
            <person name="Kumagai A."/>
            <person name="Itakura S."/>
            <person name="Fukuzumi Y."/>
            <person name="Fujimori Y."/>
            <person name="Komiyama M."/>
            <person name="Tashiro H."/>
            <person name="Tanigami A."/>
            <person name="Fujiwara T."/>
            <person name="Ono T."/>
            <person name="Yamada K."/>
            <person name="Fujii Y."/>
            <person name="Ozaki K."/>
            <person name="Hirao M."/>
            <person name="Ohmori Y."/>
            <person name="Kawabata A."/>
            <person name="Hikiji T."/>
            <person name="Kobatake N."/>
            <person name="Inagaki H."/>
            <person name="Ikema Y."/>
            <person name="Okamoto S."/>
            <person name="Okitani R."/>
            <person name="Kawakami T."/>
            <person name="Noguchi S."/>
            <person name="Itoh T."/>
            <person name="Shigeta K."/>
            <person name="Senba T."/>
            <person name="Matsumura K."/>
            <person name="Nakajima Y."/>
            <person name="Mizuno T."/>
            <person name="Morinaga M."/>
            <person name="Sasaki M."/>
            <person name="Togashi T."/>
            <person name="Oyama M."/>
            <person name="Hata H."/>
            <person name="Watanabe M."/>
            <person name="Komatsu T."/>
            <person name="Mizushima-Sugano J."/>
            <person name="Satoh T."/>
            <person name="Shirai Y."/>
            <person name="Takahashi Y."/>
            <person name="Nakagawa K."/>
            <person name="Okumura K."/>
            <person name="Nagase T."/>
            <person name="Nomura N."/>
            <person name="Kikuchi H."/>
            <person name="Masuho Y."/>
            <person name="Yamashita R."/>
            <person name="Nakai K."/>
            <person name="Yada T."/>
            <person name="Nakamura Y."/>
            <person name="Ohara O."/>
            <person name="Isogai T."/>
            <person name="Sugano S."/>
        </authorList>
    </citation>
    <scope>NUCLEOTIDE SEQUENCE [LARGE SCALE MRNA]</scope>
    <source>
        <tissue>Brain</tissue>
    </source>
</reference>
<reference key="5">
    <citation type="journal article" date="2007" name="BMC Genomics">
        <title>The full-ORF clone resource of the German cDNA consortium.</title>
        <authorList>
            <person name="Bechtel S."/>
            <person name="Rosenfelder H."/>
            <person name="Duda A."/>
            <person name="Schmidt C.P."/>
            <person name="Ernst U."/>
            <person name="Wellenreuther R."/>
            <person name="Mehrle A."/>
            <person name="Schuster C."/>
            <person name="Bahr A."/>
            <person name="Bloecker H."/>
            <person name="Heubner D."/>
            <person name="Hoerlein A."/>
            <person name="Michel G."/>
            <person name="Wedler H."/>
            <person name="Koehrer K."/>
            <person name="Ottenwaelder B."/>
            <person name="Poustka A."/>
            <person name="Wiemann S."/>
            <person name="Schupp I."/>
        </authorList>
    </citation>
    <scope>NUCLEOTIDE SEQUENCE [LARGE SCALE MRNA]</scope>
    <scope>VARIANT THR-432</scope>
    <source>
        <tissue>Adipose tissue</tissue>
        <tissue>Spinal cord</tissue>
    </source>
</reference>
<reference key="6">
    <citation type="journal article" date="2006" name="Nature">
        <title>The DNA sequence, annotation and analysis of human chromosome 3.</title>
        <authorList>
            <person name="Muzny D.M."/>
            <person name="Scherer S.E."/>
            <person name="Kaul R."/>
            <person name="Wang J."/>
            <person name="Yu J."/>
            <person name="Sudbrak R."/>
            <person name="Buhay C.J."/>
            <person name="Chen R."/>
            <person name="Cree A."/>
            <person name="Ding Y."/>
            <person name="Dugan-Rocha S."/>
            <person name="Gill R."/>
            <person name="Gunaratne P."/>
            <person name="Harris R.A."/>
            <person name="Hawes A.C."/>
            <person name="Hernandez J."/>
            <person name="Hodgson A.V."/>
            <person name="Hume J."/>
            <person name="Jackson A."/>
            <person name="Khan Z.M."/>
            <person name="Kovar-Smith C."/>
            <person name="Lewis L.R."/>
            <person name="Lozado R.J."/>
            <person name="Metzker M.L."/>
            <person name="Milosavljevic A."/>
            <person name="Miner G.R."/>
            <person name="Morgan M.B."/>
            <person name="Nazareth L.V."/>
            <person name="Scott G."/>
            <person name="Sodergren E."/>
            <person name="Song X.-Z."/>
            <person name="Steffen D."/>
            <person name="Wei S."/>
            <person name="Wheeler D.A."/>
            <person name="Wright M.W."/>
            <person name="Worley K.C."/>
            <person name="Yuan Y."/>
            <person name="Zhang Z."/>
            <person name="Adams C.Q."/>
            <person name="Ansari-Lari M.A."/>
            <person name="Ayele M."/>
            <person name="Brown M.J."/>
            <person name="Chen G."/>
            <person name="Chen Z."/>
            <person name="Clendenning J."/>
            <person name="Clerc-Blankenburg K.P."/>
            <person name="Chen R."/>
            <person name="Chen Z."/>
            <person name="Davis C."/>
            <person name="Delgado O."/>
            <person name="Dinh H.H."/>
            <person name="Dong W."/>
            <person name="Draper H."/>
            <person name="Ernst S."/>
            <person name="Fu G."/>
            <person name="Gonzalez-Garay M.L."/>
            <person name="Garcia D.K."/>
            <person name="Gillett W."/>
            <person name="Gu J."/>
            <person name="Hao B."/>
            <person name="Haugen E."/>
            <person name="Havlak P."/>
            <person name="He X."/>
            <person name="Hennig S."/>
            <person name="Hu S."/>
            <person name="Huang W."/>
            <person name="Jackson L.R."/>
            <person name="Jacob L.S."/>
            <person name="Kelly S.H."/>
            <person name="Kube M."/>
            <person name="Levy R."/>
            <person name="Li Z."/>
            <person name="Liu B."/>
            <person name="Liu J."/>
            <person name="Liu W."/>
            <person name="Lu J."/>
            <person name="Maheshwari M."/>
            <person name="Nguyen B.-V."/>
            <person name="Okwuonu G.O."/>
            <person name="Palmeiri A."/>
            <person name="Pasternak S."/>
            <person name="Perez L.M."/>
            <person name="Phelps K.A."/>
            <person name="Plopper F.J."/>
            <person name="Qiang B."/>
            <person name="Raymond C."/>
            <person name="Rodriguez R."/>
            <person name="Saenphimmachak C."/>
            <person name="Santibanez J."/>
            <person name="Shen H."/>
            <person name="Shen Y."/>
            <person name="Subramanian S."/>
            <person name="Tabor P.E."/>
            <person name="Verduzco D."/>
            <person name="Waldron L."/>
            <person name="Wang J."/>
            <person name="Wang J."/>
            <person name="Wang Q."/>
            <person name="Williams G.A."/>
            <person name="Wong G.K.-S."/>
            <person name="Yao Z."/>
            <person name="Zhang J."/>
            <person name="Zhang X."/>
            <person name="Zhao G."/>
            <person name="Zhou J."/>
            <person name="Zhou Y."/>
            <person name="Nelson D."/>
            <person name="Lehrach H."/>
            <person name="Reinhardt R."/>
            <person name="Naylor S.L."/>
            <person name="Yang H."/>
            <person name="Olson M."/>
            <person name="Weinstock G."/>
            <person name="Gibbs R.A."/>
        </authorList>
    </citation>
    <scope>NUCLEOTIDE SEQUENCE [LARGE SCALE GENOMIC DNA]</scope>
</reference>
<reference key="7">
    <citation type="submission" date="2005-07" db="EMBL/GenBank/DDBJ databases">
        <authorList>
            <person name="Mural R.J."/>
            <person name="Istrail S."/>
            <person name="Sutton G.G."/>
            <person name="Florea L."/>
            <person name="Halpern A.L."/>
            <person name="Mobarry C.M."/>
            <person name="Lippert R."/>
            <person name="Walenz B."/>
            <person name="Shatkay H."/>
            <person name="Dew I."/>
            <person name="Miller J.R."/>
            <person name="Flanigan M.J."/>
            <person name="Edwards N.J."/>
            <person name="Bolanos R."/>
            <person name="Fasulo D."/>
            <person name="Halldorsson B.V."/>
            <person name="Hannenhalli S."/>
            <person name="Turner R."/>
            <person name="Yooseph S."/>
            <person name="Lu F."/>
            <person name="Nusskern D.R."/>
            <person name="Shue B.C."/>
            <person name="Zheng X.H."/>
            <person name="Zhong F."/>
            <person name="Delcher A.L."/>
            <person name="Huson D.H."/>
            <person name="Kravitz S.A."/>
            <person name="Mouchard L."/>
            <person name="Reinert K."/>
            <person name="Remington K.A."/>
            <person name="Clark A.G."/>
            <person name="Waterman M.S."/>
            <person name="Eichler E.E."/>
            <person name="Adams M.D."/>
            <person name="Hunkapiller M.W."/>
            <person name="Myers E.W."/>
            <person name="Venter J.C."/>
        </authorList>
    </citation>
    <scope>NUCLEOTIDE SEQUENCE [LARGE SCALE GENOMIC DNA]</scope>
    <scope>VARIANT THR-432</scope>
</reference>
<reference key="8">
    <citation type="journal article" date="2004" name="Genome Res.">
        <title>The status, quality, and expansion of the NIH full-length cDNA project: the Mammalian Gene Collection (MGC).</title>
        <authorList>
            <consortium name="The MGC Project Team"/>
        </authorList>
    </citation>
    <scope>NUCLEOTIDE SEQUENCE [LARGE SCALE MRNA]</scope>
    <source>
        <tissue>Brain</tissue>
    </source>
</reference>
<comment type="function">
    <text evidence="6">Catalyzes the initial reaction in O-linked oligosaccharide biosynthesis, the transfer of an N-acetyl-D-galactosamine residue to a serine or threonine residue on the protein receptor. Although it displays a much weaker activity toward all substrates tested compared to GALNT2, it is able to transfer up to seven GalNAc residues to the Muc5AC peptide, suggesting that it can fill vicinal Thr/Ser residues in cooperation with other GALNT proteins. Prefers Muc1a as substrate.</text>
</comment>
<comment type="catalytic activity">
    <reaction evidence="6">
        <text>L-seryl-[protein] + UDP-N-acetyl-alpha-D-galactosamine = a 3-O-[N-acetyl-alpha-D-galactosaminyl]-L-seryl-[protein] + UDP + H(+)</text>
        <dbReference type="Rhea" id="RHEA:23956"/>
        <dbReference type="Rhea" id="RHEA-COMP:9863"/>
        <dbReference type="Rhea" id="RHEA-COMP:12788"/>
        <dbReference type="ChEBI" id="CHEBI:15378"/>
        <dbReference type="ChEBI" id="CHEBI:29999"/>
        <dbReference type="ChEBI" id="CHEBI:53604"/>
        <dbReference type="ChEBI" id="CHEBI:58223"/>
        <dbReference type="ChEBI" id="CHEBI:67138"/>
        <dbReference type="EC" id="2.4.1.41"/>
    </reaction>
</comment>
<comment type="catalytic activity">
    <reaction evidence="6">
        <text>L-threonyl-[protein] + UDP-N-acetyl-alpha-D-galactosamine = a 3-O-[N-acetyl-alpha-D-galactosaminyl]-L-threonyl-[protein] + UDP + H(+)</text>
        <dbReference type="Rhea" id="RHEA:52424"/>
        <dbReference type="Rhea" id="RHEA-COMP:11060"/>
        <dbReference type="Rhea" id="RHEA-COMP:11689"/>
        <dbReference type="ChEBI" id="CHEBI:15378"/>
        <dbReference type="ChEBI" id="CHEBI:30013"/>
        <dbReference type="ChEBI" id="CHEBI:58223"/>
        <dbReference type="ChEBI" id="CHEBI:67138"/>
        <dbReference type="ChEBI" id="CHEBI:87075"/>
        <dbReference type="EC" id="2.4.1.41"/>
    </reaction>
</comment>
<comment type="cofactor">
    <cofactor evidence="1">
        <name>Mn(2+)</name>
        <dbReference type="ChEBI" id="CHEBI:29035"/>
    </cofactor>
</comment>
<comment type="pathway">
    <text>Protein modification; protein glycosylation.</text>
</comment>
<comment type="interaction">
    <interactant intactId="EBI-3925203">
        <id>Q8N3T1</id>
    </interactant>
    <interactant intactId="EBI-12824513">
        <id>Q8TD46-4</id>
        <label>CD200R1</label>
    </interactant>
    <organismsDiffer>false</organismsDiffer>
    <experiments>3</experiments>
</comment>
<comment type="interaction">
    <interactant intactId="EBI-3925203">
        <id>Q8N3T1</id>
    </interactant>
    <interactant intactId="EBI-7797864">
        <id>P11912</id>
        <label>CD79A</label>
    </interactant>
    <organismsDiffer>false</organismsDiffer>
    <experiments>3</experiments>
</comment>
<comment type="interaction">
    <interactant intactId="EBI-3925203">
        <id>Q8N3T1</id>
    </interactant>
    <interactant intactId="EBI-1045797">
        <id>Q8N5K1</id>
        <label>CISD2</label>
    </interactant>
    <organismsDiffer>false</organismsDiffer>
    <experiments>3</experiments>
</comment>
<comment type="interaction">
    <interactant intactId="EBI-3925203">
        <id>Q8N3T1</id>
    </interactant>
    <interactant intactId="EBI-17640610">
        <id>P34910-2</id>
        <label>EVI2B</label>
    </interactant>
    <organismsDiffer>false</organismsDiffer>
    <experiments>3</experiments>
</comment>
<comment type="interaction">
    <interactant intactId="EBI-3925203">
        <id>Q8N3T1</id>
    </interactant>
    <interactant intactId="EBI-23889796">
        <id>Q6DN72</id>
        <label>FCRL6</label>
    </interactant>
    <organismsDiffer>false</organismsDiffer>
    <experiments>3</experiments>
</comment>
<comment type="interaction">
    <interactant intactId="EBI-3925203">
        <id>Q8N3T1</id>
    </interactant>
    <interactant intactId="EBI-2833872">
        <id>O15552</id>
        <label>FFAR2</label>
    </interactant>
    <organismsDiffer>false</organismsDiffer>
    <experiments>3</experiments>
</comment>
<comment type="interaction">
    <interactant intactId="EBI-3925203">
        <id>Q8N3T1</id>
    </interactant>
    <interactant intactId="EBI-12142257">
        <id>Q8TBE3</id>
        <label>FNDC9</label>
    </interactant>
    <organismsDiffer>false</organismsDiffer>
    <experiments>3</experiments>
</comment>
<comment type="interaction">
    <interactant intactId="EBI-3925203">
        <id>Q8N3T1</id>
    </interactant>
    <interactant intactId="EBI-712073">
        <id>Q8NBJ4</id>
        <label>GOLM1</label>
    </interactant>
    <organismsDiffer>false</organismsDiffer>
    <experiments>3</experiments>
</comment>
<comment type="interaction">
    <interactant intactId="EBI-3925203">
        <id>Q8N3T1</id>
    </interactant>
    <interactant intactId="EBI-19045531">
        <id>Q6UWB1</id>
        <label>IL27RA</label>
    </interactant>
    <organismsDiffer>false</organismsDiffer>
    <experiments>3</experiments>
</comment>
<comment type="interaction">
    <interactant intactId="EBI-3925203">
        <id>Q8N3T1</id>
    </interactant>
    <interactant intactId="EBI-12201447">
        <id>Q95460-2</id>
        <label>MR1</label>
    </interactant>
    <organismsDiffer>false</organismsDiffer>
    <experiments>3</experiments>
</comment>
<comment type="interaction">
    <interactant intactId="EBI-3925203">
        <id>Q8N3T1</id>
    </interactant>
    <interactant intactId="EBI-16427978">
        <id>Q9BQ51</id>
        <label>PDCD1LG2</label>
    </interactant>
    <organismsDiffer>false</organismsDiffer>
    <experiments>3</experiments>
</comment>
<comment type="interaction">
    <interactant intactId="EBI-3925203">
        <id>Q8N3T1</id>
    </interactant>
    <interactant intactId="EBI-716063">
        <id>Q13113</id>
        <label>PDZK1IP1</label>
    </interactant>
    <organismsDiffer>false</organismsDiffer>
    <experiments>3</experiments>
</comment>
<comment type="interaction">
    <interactant intactId="EBI-3925203">
        <id>Q8N3T1</id>
    </interactant>
    <interactant intactId="EBI-8644112">
        <id>Q9BRI3</id>
        <label>SLC30A2</label>
    </interactant>
    <organismsDiffer>false</organismsDiffer>
    <experiments>5</experiments>
</comment>
<comment type="interaction">
    <interactant intactId="EBI-3925203">
        <id>Q8N3T1</id>
    </interactant>
    <interactant intactId="EBI-4289564">
        <id>P30825</id>
        <label>SLC7A1</label>
    </interactant>
    <organismsDiffer>false</organismsDiffer>
    <experiments>3</experiments>
</comment>
<comment type="interaction">
    <interactant intactId="EBI-3925203">
        <id>Q8N3T1</id>
    </interactant>
    <interactant intactId="EBI-10273251">
        <id>Q8TBG9</id>
        <label>SYNPR</label>
    </interactant>
    <organismsDiffer>false</organismsDiffer>
    <experiments>3</experiments>
</comment>
<comment type="interaction">
    <interactant intactId="EBI-3925203">
        <id>Q8N3T1</id>
    </interactant>
    <interactant intactId="EBI-11724423">
        <id>Q7Z7N9</id>
        <label>TMEM179B</label>
    </interactant>
    <organismsDiffer>false</organismsDiffer>
    <experiments>3</experiments>
</comment>
<comment type="subcellular location">
    <subcellularLocation>
        <location evidence="1">Golgi apparatus membrane</location>
        <topology evidence="1">Single-pass type II membrane protein</topology>
    </subcellularLocation>
</comment>
<comment type="tissue specificity">
    <text evidence="5 6">Widely expressed. Highly expressed in small intestine, placenta, spleen, cerebral cortex and ovary. Expressed at intermediate level in uterus, mammary gland, stomach, cerebellum and whole brain. Weakly expressed in fetal brain, bone marrow, thyroid gland, thymus, heart, skeletal muscle, lung, liver, colon, pancreas, kidney and testis. Not expressed in leukocyte. Expressed in both normal and osteoarthritic cartilage. Expressed at low level in chondrocytes in all zones of both normal and osteoarthritic cartilage.</text>
</comment>
<comment type="domain">
    <text evidence="1">There are two conserved domains in the glycosyltransferase region: the N-terminal domain (domain A, also called GT1 motif), which is probably involved in manganese coordination and substrate binding and the C-terminal domain (domain B, also called Gal/GalNAc-T motif), which is probably involved in catalytic reaction and UDP-Gal binding.</text>
</comment>
<comment type="domain">
    <text evidence="1">The ricin B-type lectin domain binds to GalNAc and contributes to the glycopeptide specificity.</text>
</comment>
<comment type="similarity">
    <text evidence="9">Belongs to the glycosyltransferase 2 family. GalNAc-T subfamily.</text>
</comment>
<comment type="caution">
    <text evidence="10">Was originally termed Galnt15/pp-GaNTase 15.</text>
</comment>
<comment type="sequence caution" evidence="9">
    <conflict type="frameshift">
        <sequence resource="EMBL-CDS" id="CAD89983"/>
    </conflict>
</comment>
<comment type="online information" name="Functional Glycomics Gateway - GTase">
    <link uri="http://www.functionalglycomics.org/glycomics/molecule/jsp/glycoEnzyme/viewGlycoEnzyme.jsp?gbpId=gt_hum_501"/>
    <text>Polypeptide N-acetylgalactosaminyltransferase-like protein 2</text>
</comment>
<accession>Q8N3T1</accession>
<accession>A6NMN1</accession>
<accession>B2R638</accession>
<accession>F1LIP6</accession>
<accession>Q86T60</accession>
<accession>Q96C46</accession>
<accession>Q96DJ5</accession>
<gene>
    <name type="primary">GALNT15</name>
    <name type="synonym">GALNTL2</name>
    <name type="ORF">UNQ770/PRO1564</name>
</gene>
<protein>
    <recommendedName>
        <fullName>Polypeptide N-acetylgalactosaminyltransferase 15</fullName>
        <ecNumber evidence="6">2.4.1.41</ecNumber>
    </recommendedName>
    <alternativeName>
        <fullName>Polypeptide GalNAc transferase-like protein 2</fullName>
        <shortName>GalNAc-T-like protein 2</shortName>
        <shortName>pp-GaNTase-like protein 2</shortName>
    </alternativeName>
    <alternativeName>
        <fullName>Polypeptide N-acetylgalactosaminyltransferase-like protein 2</fullName>
    </alternativeName>
    <alternativeName>
        <fullName>Protein-UDP acetylgalactosaminyltransferase-like protein 2</fullName>
    </alternativeName>
    <alternativeName>
        <fullName>UDP-GalNAc:polypeptide N-acetylgalactosaminyltransferase-like protein 2</fullName>
    </alternativeName>
</protein>
<proteinExistence type="evidence at protein level"/>
<sequence>MLLRKRYRHRPCRLQFLLLLLMLGCVLMMVAMLHPPHHTLHQTVTAQASKHSPEARYRLDFGESQDWVLEAEDEGEEYSPLEGLPPFISLREDQLLVAVALPQARRNQSQGRRGGSYRLIKQPRRQDKEAPKRDWGADEDGEVSEEEELTPFSLDPRGLQEALSARIPLQRALPEVRHPLCLQQHPQDSLPTASVILCFHDEAWSTLLRTVHSILDTVPRAFLKEIILVDDLSQQGQLKSALSEYVARLEGVKLLRSNKRLGAIRARMLGATRATGDVLVFMDAHCECHPGWLEPLLSRIAGDRSRVVSPVIDVIDWKTFQYYPSKDLQRGVLDWKLDFHWEPLPEHVRKALQSPISPIRSPVVPGEVVAMDRHYFQNTGAYDSLMSLRGGENLELSFKAWLCGGSVEILPCSRVGHIYQNQDSHSPLDQEATLRNRVRIAETWLGSFKETFYKHSPEAFSLSKAEKPDCMERLQLQRRLGCRTFHWFLANVYPELYPSEPRPSFSGKLHNTGLGLCADCQAEGDILGCPMVLAPCSDSRQQQYLQHTSRKEIHFGSPQHLCFAVRQEQVILQNCTEEGLAIHQQHWDFQENGMIVHILSGKCMEAVVQENNKDLYLRPCDGKARQQWRFDQINAVDER</sequence>
<dbReference type="EC" id="2.4.1.41" evidence="6"/>
<dbReference type="EMBL" id="AB078149">
    <property type="protein sequence ID" value="BAD29961.1"/>
    <property type="molecule type" value="mRNA"/>
</dbReference>
<dbReference type="EMBL" id="AY035399">
    <property type="protein sequence ID" value="AAK63127.1"/>
    <property type="molecule type" value="mRNA"/>
</dbReference>
<dbReference type="EMBL" id="AY358443">
    <property type="protein sequence ID" value="AAQ88808.1"/>
    <property type="molecule type" value="mRNA"/>
</dbReference>
<dbReference type="EMBL" id="AK312425">
    <property type="protein sequence ID" value="BAG35335.1"/>
    <property type="molecule type" value="mRNA"/>
</dbReference>
<dbReference type="EMBL" id="AL831925">
    <property type="protein sequence ID" value="CAD38585.1"/>
    <property type="molecule type" value="mRNA"/>
</dbReference>
<dbReference type="EMBL" id="AL832575">
    <property type="protein sequence ID" value="CAD89983.1"/>
    <property type="status" value="ALT_FRAME"/>
    <property type="molecule type" value="mRNA"/>
</dbReference>
<dbReference type="EMBL" id="AC087858">
    <property type="status" value="NOT_ANNOTATED_CDS"/>
    <property type="molecule type" value="Genomic_DNA"/>
</dbReference>
<dbReference type="EMBL" id="CH471055">
    <property type="protein sequence ID" value="EAW64266.1"/>
    <property type="molecule type" value="Genomic_DNA"/>
</dbReference>
<dbReference type="EMBL" id="BC014789">
    <property type="protein sequence ID" value="AAH14789.1"/>
    <property type="molecule type" value="mRNA"/>
</dbReference>
<dbReference type="CCDS" id="CCDS33711.1"/>
<dbReference type="RefSeq" id="NP_473451.3">
    <property type="nucleotide sequence ID" value="NM_054110.4"/>
</dbReference>
<dbReference type="SMR" id="Q8N3T1"/>
<dbReference type="BioGRID" id="125583">
    <property type="interactions" value="18"/>
</dbReference>
<dbReference type="FunCoup" id="Q8N3T1">
    <property type="interactions" value="195"/>
</dbReference>
<dbReference type="IntAct" id="Q8N3T1">
    <property type="interactions" value="17"/>
</dbReference>
<dbReference type="STRING" id="9606.ENSP00000344260"/>
<dbReference type="CAZy" id="CBM13">
    <property type="family name" value="Carbohydrate-Binding Module Family 13"/>
</dbReference>
<dbReference type="CAZy" id="GT27">
    <property type="family name" value="Glycosyltransferase Family 27"/>
</dbReference>
<dbReference type="GlyCosmos" id="Q8N3T1">
    <property type="glycosylation" value="2 sites, No reported glycans"/>
</dbReference>
<dbReference type="GlyGen" id="Q8N3T1">
    <property type="glycosylation" value="2 sites"/>
</dbReference>
<dbReference type="PhosphoSitePlus" id="Q8N3T1"/>
<dbReference type="BioMuta" id="GALNT15"/>
<dbReference type="DMDM" id="51316023"/>
<dbReference type="MassIVE" id="Q8N3T1"/>
<dbReference type="PaxDb" id="9606-ENSP00000344260"/>
<dbReference type="PeptideAtlas" id="Q8N3T1"/>
<dbReference type="ProteomicsDB" id="71833"/>
<dbReference type="Antibodypedia" id="2430">
    <property type="antibodies" value="62 antibodies from 17 providers"/>
</dbReference>
<dbReference type="DNASU" id="117248"/>
<dbReference type="Ensembl" id="ENST00000339732.10">
    <property type="protein sequence ID" value="ENSP00000344260.5"/>
    <property type="gene ID" value="ENSG00000131386.20"/>
</dbReference>
<dbReference type="GeneID" id="117248"/>
<dbReference type="KEGG" id="hsa:117248"/>
<dbReference type="MANE-Select" id="ENST00000339732.10">
    <property type="protein sequence ID" value="ENSP00000344260.5"/>
    <property type="RefSeq nucleotide sequence ID" value="NM_054110.5"/>
    <property type="RefSeq protein sequence ID" value="NP_473451.3"/>
</dbReference>
<dbReference type="UCSC" id="uc003car.5">
    <property type="organism name" value="human"/>
</dbReference>
<dbReference type="AGR" id="HGNC:21531"/>
<dbReference type="CTD" id="117248"/>
<dbReference type="DisGeNET" id="117248"/>
<dbReference type="GeneCards" id="GALNT15"/>
<dbReference type="HGNC" id="HGNC:21531">
    <property type="gene designation" value="GALNT15"/>
</dbReference>
<dbReference type="HPA" id="ENSG00000131386">
    <property type="expression patterns" value="Tissue enhanced (adipose)"/>
</dbReference>
<dbReference type="MIM" id="615131">
    <property type="type" value="gene"/>
</dbReference>
<dbReference type="neXtProt" id="NX_Q8N3T1"/>
<dbReference type="OpenTargets" id="ENSG00000131386"/>
<dbReference type="PharmGKB" id="PA134936170"/>
<dbReference type="VEuPathDB" id="HostDB:ENSG00000131386"/>
<dbReference type="eggNOG" id="KOG3736">
    <property type="taxonomic scope" value="Eukaryota"/>
</dbReference>
<dbReference type="GeneTree" id="ENSGT00940000160808"/>
<dbReference type="HOGENOM" id="CLU_013477_0_3_1"/>
<dbReference type="InParanoid" id="Q8N3T1"/>
<dbReference type="OMA" id="MVLWGAE"/>
<dbReference type="OrthoDB" id="416652at2759"/>
<dbReference type="PAN-GO" id="Q8N3T1">
    <property type="GO annotations" value="3 GO annotations based on evolutionary models"/>
</dbReference>
<dbReference type="PhylomeDB" id="Q8N3T1"/>
<dbReference type="TreeFam" id="TF313267"/>
<dbReference type="PathwayCommons" id="Q8N3T1"/>
<dbReference type="Reactome" id="R-HSA-913709">
    <property type="pathway name" value="O-linked glycosylation of mucins"/>
</dbReference>
<dbReference type="SignaLink" id="Q8N3T1"/>
<dbReference type="UniPathway" id="UPA00378"/>
<dbReference type="BioGRID-ORCS" id="117248">
    <property type="hits" value="6 hits in 1142 CRISPR screens"/>
</dbReference>
<dbReference type="ChiTaRS" id="GALNT15">
    <property type="organism name" value="human"/>
</dbReference>
<dbReference type="GeneWiki" id="GALNTL2"/>
<dbReference type="GenomeRNAi" id="117248"/>
<dbReference type="Pharos" id="Q8N3T1">
    <property type="development level" value="Tbio"/>
</dbReference>
<dbReference type="PRO" id="PR:Q8N3T1"/>
<dbReference type="Proteomes" id="UP000005640">
    <property type="component" value="Chromosome 3"/>
</dbReference>
<dbReference type="RNAct" id="Q8N3T1">
    <property type="molecule type" value="protein"/>
</dbReference>
<dbReference type="Bgee" id="ENSG00000131386">
    <property type="expression patterns" value="Expressed in mucosa of stomach and 169 other cell types or tissues"/>
</dbReference>
<dbReference type="ExpressionAtlas" id="Q8N3T1">
    <property type="expression patterns" value="baseline and differential"/>
</dbReference>
<dbReference type="GO" id="GO:0005794">
    <property type="term" value="C:Golgi apparatus"/>
    <property type="evidence" value="ECO:0000318"/>
    <property type="project" value="GO_Central"/>
</dbReference>
<dbReference type="GO" id="GO:0000139">
    <property type="term" value="C:Golgi membrane"/>
    <property type="evidence" value="ECO:0000304"/>
    <property type="project" value="Reactome"/>
</dbReference>
<dbReference type="GO" id="GO:0030133">
    <property type="term" value="C:transport vesicle"/>
    <property type="evidence" value="ECO:0000314"/>
    <property type="project" value="LIFEdb"/>
</dbReference>
<dbReference type="GO" id="GO:0030246">
    <property type="term" value="F:carbohydrate binding"/>
    <property type="evidence" value="ECO:0007669"/>
    <property type="project" value="UniProtKB-KW"/>
</dbReference>
<dbReference type="GO" id="GO:0046872">
    <property type="term" value="F:metal ion binding"/>
    <property type="evidence" value="ECO:0007669"/>
    <property type="project" value="UniProtKB-KW"/>
</dbReference>
<dbReference type="GO" id="GO:0004653">
    <property type="term" value="F:polypeptide N-acetylgalactosaminyltransferase activity"/>
    <property type="evidence" value="ECO:0000318"/>
    <property type="project" value="GO_Central"/>
</dbReference>
<dbReference type="GO" id="GO:0016266">
    <property type="term" value="P:O-glycan processing"/>
    <property type="evidence" value="ECO:0000304"/>
    <property type="project" value="Reactome"/>
</dbReference>
<dbReference type="GO" id="GO:0006493">
    <property type="term" value="P:protein O-linked glycosylation"/>
    <property type="evidence" value="ECO:0000318"/>
    <property type="project" value="GO_Central"/>
</dbReference>
<dbReference type="CDD" id="cd23442">
    <property type="entry name" value="beta-trefoil_Ricin_GALNT15"/>
    <property type="match status" value="1"/>
</dbReference>
<dbReference type="CDD" id="cd02510">
    <property type="entry name" value="pp-GalNAc-T"/>
    <property type="match status" value="1"/>
</dbReference>
<dbReference type="FunFam" id="2.80.10.50:FF:000058">
    <property type="entry name" value="Polypeptide N-acetylgalactosaminyltransferase"/>
    <property type="match status" value="1"/>
</dbReference>
<dbReference type="FunFam" id="3.90.550.10:FF:000081">
    <property type="entry name" value="Polypeptide N-acetylgalactosaminyltransferase"/>
    <property type="match status" value="1"/>
</dbReference>
<dbReference type="Gene3D" id="2.80.10.50">
    <property type="match status" value="1"/>
</dbReference>
<dbReference type="Gene3D" id="3.90.550.10">
    <property type="entry name" value="Spore Coat Polysaccharide Biosynthesis Protein SpsA, Chain A"/>
    <property type="match status" value="1"/>
</dbReference>
<dbReference type="InterPro" id="IPR045885">
    <property type="entry name" value="GalNAc-T"/>
</dbReference>
<dbReference type="InterPro" id="IPR001173">
    <property type="entry name" value="Glyco_trans_2-like"/>
</dbReference>
<dbReference type="InterPro" id="IPR029044">
    <property type="entry name" value="Nucleotide-diphossugar_trans"/>
</dbReference>
<dbReference type="InterPro" id="IPR035992">
    <property type="entry name" value="Ricin_B-like_lectins"/>
</dbReference>
<dbReference type="InterPro" id="IPR000772">
    <property type="entry name" value="Ricin_B_lectin"/>
</dbReference>
<dbReference type="PANTHER" id="PTHR11675">
    <property type="entry name" value="N-ACETYLGALACTOSAMINYLTRANSFERASE"/>
    <property type="match status" value="1"/>
</dbReference>
<dbReference type="PANTHER" id="PTHR11675:SF36">
    <property type="entry name" value="POLYPEPTIDE N-ACETYLGALACTOSAMINYLTRANSFERASE 15"/>
    <property type="match status" value="1"/>
</dbReference>
<dbReference type="Pfam" id="PF00535">
    <property type="entry name" value="Glycos_transf_2"/>
    <property type="match status" value="1"/>
</dbReference>
<dbReference type="Pfam" id="PF00652">
    <property type="entry name" value="Ricin_B_lectin"/>
    <property type="match status" value="1"/>
</dbReference>
<dbReference type="SMART" id="SM00458">
    <property type="entry name" value="RICIN"/>
    <property type="match status" value="1"/>
</dbReference>
<dbReference type="SUPFAM" id="SSF53448">
    <property type="entry name" value="Nucleotide-diphospho-sugar transferases"/>
    <property type="match status" value="1"/>
</dbReference>
<dbReference type="SUPFAM" id="SSF50370">
    <property type="entry name" value="Ricin B-like lectins"/>
    <property type="match status" value="1"/>
</dbReference>
<dbReference type="PROSITE" id="PS50231">
    <property type="entry name" value="RICIN_B_LECTIN"/>
    <property type="match status" value="1"/>
</dbReference>
<evidence type="ECO:0000250" key="1"/>
<evidence type="ECO:0000255" key="2"/>
<evidence type="ECO:0000255" key="3">
    <source>
        <dbReference type="PROSITE-ProRule" id="PRU00174"/>
    </source>
</evidence>
<evidence type="ECO:0000256" key="4">
    <source>
        <dbReference type="SAM" id="MobiDB-lite"/>
    </source>
</evidence>
<evidence type="ECO:0000269" key="5">
    <source>
    </source>
</evidence>
<evidence type="ECO:0000269" key="6">
    <source>
    </source>
</evidence>
<evidence type="ECO:0000269" key="7">
    <source>
    </source>
</evidence>
<evidence type="ECO:0000269" key="8">
    <source ref="7"/>
</evidence>
<evidence type="ECO:0000305" key="9"/>
<evidence type="ECO:0000305" key="10">
    <source>
    </source>
</evidence>